<name>CIF_ECOLX</name>
<feature type="chain" id="PRO_0000453902" description="Protein-glutamine deamidase Cif">
    <location>
        <begin position="1"/>
        <end position="282"/>
    </location>
</feature>
<feature type="region of interest" description="Translocation domain (TD)" evidence="3">
    <location>
        <begin position="1"/>
        <end position="16"/>
    </location>
</feature>
<feature type="active site" evidence="17 18 19">
    <location>
        <position position="109"/>
    </location>
</feature>
<feature type="active site" evidence="17 18">
    <location>
        <position position="165"/>
    </location>
</feature>
<feature type="active site" evidence="18">
    <location>
        <position position="185"/>
    </location>
</feature>
<feature type="mutagenesis site" description="Impaired ability to mediate deamidation of host NEDD8 and inhibit the host cell cycle." evidence="11">
    <original>DD</original>
    <variation>AA</variation>
    <location>
        <begin position="58"/>
        <end position="59"/>
    </location>
</feature>
<feature type="mutagenesis site" description="Abolished ability to inhibit the host cell cycle. Abolished accumulation of the cyclin-dependent kinase inhibitors CDKN1A/p21 and CDKN1B/p27." evidence="7 8 9">
    <original>C</original>
    <variation>A</variation>
    <variation>S</variation>
    <location>
        <position position="109"/>
    </location>
</feature>
<feature type="mutagenesis site" description="No effect; does not affect ability to mediate deamidation of host NEDD8." evidence="11">
    <original>V</original>
    <variation>A</variation>
    <location>
        <position position="111"/>
    </location>
</feature>
<feature type="mutagenesis site" description="Impaired ability to mediate deamidation of host NEDD8 and inhibit the host cell cycle; when associated with A-159." evidence="11">
    <original>N</original>
    <variation>A</variation>
    <location>
        <position position="114"/>
    </location>
</feature>
<feature type="mutagenesis site" description="No effect; does not affect ability to mediate deamidation of host NEDD8." evidence="11">
    <original>E</original>
    <variation>A</variation>
    <location>
        <position position="139"/>
    </location>
</feature>
<feature type="mutagenesis site" description="No effect; does not affect ability to mediate deamidation of host NEDD8." evidence="11">
    <original>K</original>
    <variation>A</variation>
    <location>
        <position position="152"/>
    </location>
</feature>
<feature type="mutagenesis site" description="Impaired ability to mediate deamidation of host NEDD8 and inhibit the host cell cycle; when associated with A-114." evidence="11">
    <original>N</original>
    <variation>A</variation>
    <location>
        <position position="159"/>
    </location>
</feature>
<feature type="mutagenesis site" description="Abolished ability to inhibit the host cell cycle." evidence="7 8">
    <original>H</original>
    <variation>N</variation>
    <location>
        <position position="165"/>
    </location>
</feature>
<feature type="mutagenesis site" description="Abolished ability to inhibit the host cell cycle." evidence="8">
    <original>Q</original>
    <variation>A</variation>
    <location>
        <position position="185"/>
    </location>
</feature>
<feature type="mutagenesis site" description="Does not affect ability to inhibit the host cell cycle." evidence="8">
    <original>D</original>
    <variation>N</variation>
    <location>
        <position position="187"/>
    </location>
</feature>
<keyword id="KW-0002">3D-structure</keyword>
<keyword id="KW-1048">Host nucleus</keyword>
<keyword id="KW-0378">Hydrolase</keyword>
<keyword id="KW-0614">Plasmid</keyword>
<keyword id="KW-0964">Secreted</keyword>
<keyword id="KW-0800">Toxin</keyword>
<keyword id="KW-0843">Virulence</keyword>
<comment type="function">
    <text evidence="1 2 4 5 6 8 9 10 11 12 13">Protein-glutamine deamidase effector that inhibits the host cell cycle and other key cellular processes such as the actin network and programmed-cell death (PubMed:14651638, PubMed:16848790, PubMed:17873042, PubMed:18705694, PubMed:19225106, PubMed:19308257, PubMed:19786559, PubMed:20688984, PubMed:20941356). Acts by mediating the side chain deamidation of 'Gln-40' of host NEDD8, converting it to glutamate, thereby abolishing the activity of cullin-RING-based E3 ubiquitin-protein ligase complexes (CRL complexes) (PubMed:20688984, PubMed:20941356, PubMed:23589306). Inactivation of CRL complexes prevents ubiquitination and subsequent degradation of the cyclin-dependent kinase inhibitors CDKN1A/p21 and CDKN1B/p27, leading to G1 and G2 cell cycle arrests in host cells (PubMed:18705694, PubMed:19308257, PubMed:20941356). Also able to catalyze deamidation of 'Gln-40' of host ubiquitin in vitro; however, NEDD8 constitutes the preferred substrate in vivo (By similarity).</text>
</comment>
<comment type="catalytic activity">
    <reaction evidence="13 20">
        <text>L-glutaminyl-[protein] + H2O = L-glutamyl-[protein] + NH4(+)</text>
        <dbReference type="Rhea" id="RHEA:16441"/>
        <dbReference type="Rhea" id="RHEA-COMP:10207"/>
        <dbReference type="Rhea" id="RHEA-COMP:10208"/>
        <dbReference type="ChEBI" id="CHEBI:15377"/>
        <dbReference type="ChEBI" id="CHEBI:28938"/>
        <dbReference type="ChEBI" id="CHEBI:29973"/>
        <dbReference type="ChEBI" id="CHEBI:30011"/>
        <dbReference type="EC" id="3.5.1.44"/>
    </reaction>
    <physiologicalReaction direction="left-to-right" evidence="13 20">
        <dbReference type="Rhea" id="RHEA:16442"/>
    </physiologicalReaction>
</comment>
<comment type="subcellular location">
    <subcellularLocation>
        <location evidence="3 9 11 16">Secreted</location>
    </subcellularLocation>
    <subcellularLocation>
        <location evidence="12">Host nucleus</location>
    </subcellularLocation>
    <text evidence="2 3 9 11">Secreted via the type III secretion system (T3SS).</text>
</comment>
<comment type="domain">
    <text evidence="3">The translocation domain (TD) is necessary and sufficient to mediate translocation into the host cells.</text>
</comment>
<comment type="similarity">
    <text evidence="15">Belongs to the Cif family.</text>
</comment>
<sequence>MKDITLPPPTSASCLTGAISVNTEAVLSPMQHTSALHVRDFASLCSQNLKANVLLNSDDHEVPIHQKNPAAIMQNIDSNIKQMATDWGMSIEEVEVIIGREKGIVEPSCGVTANAIMKLFLDKDGFSYCFENEQTLSLEQLQERLSCMPECKSFVLRVNDGALGHAYIVDIPKGENSCRPAFLYQSDLGEGVTRKLRFEDWMTHKALTPILLDDICNYFSCMSQNKTDLEQIATLFDIDGNVKMLRKENIQYQKHDNFSFQLFEYDTDNIEKNIEIIKSLCS</sequence>
<evidence type="ECO:0000250" key="1">
    <source>
        <dbReference type="UniProtKB" id="Q63KH5"/>
    </source>
</evidence>
<evidence type="ECO:0000269" key="2">
    <source>
    </source>
</evidence>
<evidence type="ECO:0000269" key="3">
    <source>
    </source>
</evidence>
<evidence type="ECO:0000269" key="4">
    <source>
    </source>
</evidence>
<evidence type="ECO:0000269" key="5">
    <source>
    </source>
</evidence>
<evidence type="ECO:0000269" key="6">
    <source>
    </source>
</evidence>
<evidence type="ECO:0000269" key="7">
    <source>
    </source>
</evidence>
<evidence type="ECO:0000269" key="8">
    <source>
    </source>
</evidence>
<evidence type="ECO:0000269" key="9">
    <source>
    </source>
</evidence>
<evidence type="ECO:0000269" key="10">
    <source>
    </source>
</evidence>
<evidence type="ECO:0000269" key="11">
    <source>
    </source>
</evidence>
<evidence type="ECO:0000269" key="12">
    <source>
    </source>
</evidence>
<evidence type="ECO:0000269" key="13">
    <source>
    </source>
</evidence>
<evidence type="ECO:0000303" key="14">
    <source>
    </source>
</evidence>
<evidence type="ECO:0000305" key="15"/>
<evidence type="ECO:0000305" key="16">
    <source>
    </source>
</evidence>
<evidence type="ECO:0000305" key="17">
    <source>
    </source>
</evidence>
<evidence type="ECO:0000305" key="18">
    <source>
    </source>
</evidence>
<evidence type="ECO:0000305" key="19">
    <source>
    </source>
</evidence>
<evidence type="ECO:0000305" key="20">
    <source>
    </source>
</evidence>
<evidence type="ECO:0007744" key="21">
    <source>
        <dbReference type="PDB" id="3EFY"/>
    </source>
</evidence>
<dbReference type="EC" id="3.5.1.44" evidence="13 20"/>
<dbReference type="EMBL" id="AY128535">
    <property type="protein sequence ID" value="AAN07901.1"/>
    <property type="molecule type" value="Genomic_DNA"/>
</dbReference>
<dbReference type="EMBL" id="AY128537">
    <property type="protein sequence ID" value="AAN07903.1"/>
    <property type="molecule type" value="Genomic_DNA"/>
</dbReference>
<dbReference type="EMBL" id="AY128542">
    <property type="protein sequence ID" value="AAN07916.1"/>
    <property type="molecule type" value="Genomic_DNA"/>
</dbReference>
<dbReference type="EMBL" id="AY128544">
    <property type="protein sequence ID" value="AAN07918.1"/>
    <property type="molecule type" value="Genomic_DNA"/>
</dbReference>
<dbReference type="EMBL" id="AF497476">
    <property type="protein sequence ID" value="AAQ07241.1"/>
    <property type="molecule type" value="Genomic_DNA"/>
</dbReference>
<dbReference type="RefSeq" id="WP_000652080.1">
    <property type="nucleotide sequence ID" value="NZ_WVUO01000055.1"/>
</dbReference>
<dbReference type="PDB" id="3EFY">
    <property type="method" value="X-ray"/>
    <property type="resolution" value="1.70 A"/>
    <property type="chains" value="A/B=100-282"/>
</dbReference>
<dbReference type="PDBsum" id="3EFY"/>
<dbReference type="SMR" id="P0DUW5"/>
<dbReference type="GO" id="GO:0005576">
    <property type="term" value="C:extracellular region"/>
    <property type="evidence" value="ECO:0007669"/>
    <property type="project" value="UniProtKB-SubCell"/>
</dbReference>
<dbReference type="GO" id="GO:0042025">
    <property type="term" value="C:host cell nucleus"/>
    <property type="evidence" value="ECO:0000314"/>
    <property type="project" value="UniProtKB"/>
</dbReference>
<dbReference type="GO" id="GO:0050568">
    <property type="term" value="F:protein-glutamine glutaminase activity"/>
    <property type="evidence" value="ECO:0000314"/>
    <property type="project" value="UniProtKB"/>
</dbReference>
<dbReference type="GO" id="GO:0090729">
    <property type="term" value="F:toxin activity"/>
    <property type="evidence" value="ECO:0000314"/>
    <property type="project" value="UniProtKB"/>
</dbReference>
<dbReference type="GO" id="GO:0044071">
    <property type="term" value="P:symbiont-mediated perturbation of host cell cycle progression"/>
    <property type="evidence" value="ECO:0000314"/>
    <property type="project" value="UniProtKB"/>
</dbReference>
<dbReference type="InterPro" id="IPR032278">
    <property type="entry name" value="Cif"/>
</dbReference>
<dbReference type="Pfam" id="PF16374">
    <property type="entry name" value="CIF"/>
    <property type="match status" value="1"/>
</dbReference>
<organism>
    <name type="scientific">Escherichia coli</name>
    <dbReference type="NCBI Taxonomy" id="562"/>
    <lineage>
        <taxon>Bacteria</taxon>
        <taxon>Pseudomonadati</taxon>
        <taxon>Pseudomonadota</taxon>
        <taxon>Gammaproteobacteria</taxon>
        <taxon>Enterobacterales</taxon>
        <taxon>Enterobacteriaceae</taxon>
        <taxon>Escherichia</taxon>
    </lineage>
</organism>
<gene>
    <name evidence="14" type="primary">cif</name>
</gene>
<reference key="1">
    <citation type="journal article" date="2003" name="Mol. Microbiol.">
        <title>Enteropathogenic and enterohaemorrhagic Escherichia coli deliver a novel effector called Cif, which blocks cell cycle G2/M transition.</title>
        <authorList>
            <person name="Marches O."/>
            <person name="Ledger T.N."/>
            <person name="Boury M."/>
            <person name="Ohara M."/>
            <person name="Tu X."/>
            <person name="Goffaux F."/>
            <person name="Mainil J."/>
            <person name="Rosenshine I."/>
            <person name="Sugai M."/>
            <person name="De Rycke J."/>
            <person name="Oswald E."/>
        </authorList>
    </citation>
    <scope>NUCLEOTIDE SEQUENCE [GENOMIC DNA]</scope>
    <scope>FUNCTION</scope>
    <scope>SUBCELLULAR LOCATION</scope>
    <source>
        <strain>C/15333</strain>
        <strain>CF11201</strain>
        <strain>E22</strain>
        <strain>EF26</strain>
        <strain>EF33</strain>
        <plasmid>pFX13</plasmid>
    </source>
</reference>
<reference key="2">
    <citation type="journal article" date="2004" name="J. Bacteriol.">
        <title>Identification of the secretion and translocation domain of the enteropathogenic and enterohemorrhagic Escherichia coli effector Cif, using TEM-1 beta-lactamase as a new fluorescence-based reporter.</title>
        <authorList>
            <person name="Charpentier X."/>
            <person name="Oswald E."/>
        </authorList>
    </citation>
    <scope>SUBCELLULAR LOCATION</scope>
    <scope>TRANSLOCATION DOMAIN</scope>
    <scope>DOMAIN</scope>
    <source>
        <strain>O103:H2 / B10 / EPEC</strain>
    </source>
</reference>
<reference key="3">
    <citation type="journal article" date="2006" name="Cell. Microbiol.">
        <title>Escherichia coli cyclomodulin Cif induces G2 arrest of the host cell cycle without activation of the DNA-damage checkpoint-signalling pathway.</title>
        <authorList>
            <person name="Taieb F."/>
            <person name="Nougayrede J.P."/>
            <person name="Watrin C."/>
            <person name="Samba-Louaka A."/>
            <person name="Oswald E."/>
        </authorList>
    </citation>
    <scope>FUNCTION</scope>
    <source>
        <strain>O111:H- / B171 / EPEC</strain>
    </source>
</reference>
<reference key="4">
    <citation type="journal article" date="2008" name="Cell. Microbiol.">
        <title>Bacterial cyclomodulin Cif blocks the host cell cycle by stabilizing the cyclin-dependent kinase inhibitors p21 and p27.</title>
        <authorList>
            <person name="Samba-Louaka A."/>
            <person name="Nougayrede J.P."/>
            <person name="Watrin C."/>
            <person name="Jubelin G."/>
            <person name="Oswald E."/>
            <person name="Taieb F."/>
        </authorList>
    </citation>
    <scope>FUNCTION</scope>
    <source>
        <strain>O111:H- / B171 / EPEC</strain>
    </source>
</reference>
<reference key="5">
    <citation type="journal article" date="2008" name="J. Bacteriol.">
        <title>Distribution, functional expression, and genetic organization of Cif, a phage-encoded type III-secreted effector from enteropathogenic and enterohemorrhagic Escherichia coli.</title>
        <authorList>
            <person name="Loukiadis E."/>
            <person name="Nobe R."/>
            <person name="Herold S."/>
            <person name="Tramuta C."/>
            <person name="Ogura Y."/>
            <person name="Ooka T."/>
            <person name="Morabito S."/>
            <person name="Kerouredan M."/>
            <person name="Brugere H."/>
            <person name="Schmidt H."/>
            <person name="Hayashi T."/>
            <person name="Oswald E."/>
        </authorList>
    </citation>
    <scope>FUNCTION</scope>
</reference>
<reference key="6">
    <citation type="journal article" date="2009" name="Infect. Immun.">
        <title>The enteropathogenic Escherichia coli effector Cif induces delayed apoptosis in epithelial cells.</title>
        <authorList>
            <person name="Samba-Louaka A."/>
            <person name="Nougayrede J.P."/>
            <person name="Watrin C."/>
            <person name="Oswald E."/>
            <person name="Taieb F."/>
        </authorList>
    </citation>
    <scope>FUNCTION</scope>
    <source>
        <strain>O103:H2 / B10 / EPEC</strain>
    </source>
</reference>
<reference key="7">
    <citation type="journal article" date="2009" name="PLoS ONE">
        <title>Cycle inhibiting factors (CIFs) are a growing family of functional cyclomodulins present in invertebrate and mammal bacterial pathogens.</title>
        <authorList>
            <person name="Jubelin G."/>
            <person name="Chavez C.V."/>
            <person name="Taieb F."/>
            <person name="Banfield M.J."/>
            <person name="Samba-Louaka A."/>
            <person name="Nobe R."/>
            <person name="Nougayrede J.P."/>
            <person name="Zumbihl R."/>
            <person name="Givaudan A."/>
            <person name="Escoubas J.M."/>
            <person name="Oswald E."/>
        </authorList>
    </citation>
    <scope>FUNCTION</scope>
    <scope>ACTIVE SITE</scope>
    <scope>SUBCELLULAR LOCATION</scope>
    <scope>MUTAGENESIS OF CYS-109</scope>
</reference>
<reference key="8">
    <citation type="journal article" date="2009" name="Proc. Natl. Acad. Sci. U.S.A.">
        <title>A bacterial type III effector family uses the papain-like hydrolytic activity to arrest the host cell cycle.</title>
        <authorList>
            <person name="Yao Q."/>
            <person name="Cui J."/>
            <person name="Zhu Y."/>
            <person name="Wang G."/>
            <person name="Hu L."/>
            <person name="Long C."/>
            <person name="Cao R."/>
            <person name="Liu X."/>
            <person name="Huang N."/>
            <person name="Chen S."/>
            <person name="Liu L."/>
            <person name="Shao F."/>
        </authorList>
    </citation>
    <scope>FUNCTION</scope>
    <scope>ACTIVE SITES</scope>
    <scope>MUTAGENESIS OF CYS-109; HIS-165; GLN-185 AND ASP-187</scope>
</reference>
<reference key="9">
    <citation type="journal article" date="2010" name="PLoS Pathog.">
        <title>Pathogenic bacteria target NEDD8-conjugated cullins to hijack host-cell signaling pathways.</title>
        <authorList>
            <person name="Jubelin G."/>
            <person name="Taieb F."/>
            <person name="Duda D.M."/>
            <person name="Hsu Y."/>
            <person name="Samba-Louaka A."/>
            <person name="Nobe R."/>
            <person name="Penary M."/>
            <person name="Watrin C."/>
            <person name="Nougayrede J.P."/>
            <person name="Schulman B.A."/>
            <person name="Stebbins C.E."/>
            <person name="Oswald E."/>
        </authorList>
    </citation>
    <scope>FUNCTION</scope>
    <scope>SUBCELLULAR LOCATION</scope>
    <source>
        <strain>O103:H2 / B10 / EPEC</strain>
    </source>
</reference>
<reference key="10">
    <citation type="journal article" date="2010" name="Science">
        <title>Glutamine deamidation and dysfunction of ubiquitin/NEDD8 induced by a bacterial effector family.</title>
        <authorList>
            <person name="Cui J."/>
            <person name="Yao Q."/>
            <person name="Li S."/>
            <person name="Ding X."/>
            <person name="Lu Q."/>
            <person name="Mao H."/>
            <person name="Liu L."/>
            <person name="Zheng N."/>
            <person name="Chen S."/>
            <person name="Shao F."/>
        </authorList>
    </citation>
    <scope>FUNCTION</scope>
    <scope>CATALYTIC ACTIVITY</scope>
    <scope>SUBCELLULAR LOCATION</scope>
    <scope>MUTAGENESIS OF 58-ASP-ASP-59; VAL-111; ASN-114; GLU-139; LYS-152 AND ASN-159</scope>
</reference>
<reference key="11">
    <citation type="journal article" date="2013" name="J. Biol. Chem.">
        <title>The cyclomodulin cycle inhibiting factor (CIF) alters cullin neddylation dynamics.</title>
        <authorList>
            <person name="Toro T.B."/>
            <person name="Toth J.I."/>
            <person name="Petroski M.D."/>
        </authorList>
    </citation>
    <scope>FUNCTION</scope>
    <scope>CATALYTIC ACTIVITY</scope>
</reference>
<reference evidence="21" key="12">
    <citation type="journal article" date="2008" name="J. Mol. Biol.">
        <title>Structure of the cyclomodulin Cif from pathogenic Escherichia coli.</title>
        <authorList>
            <person name="Hsu Y."/>
            <person name="Jubelin G."/>
            <person name="Taieb F."/>
            <person name="Nougayrede J.P."/>
            <person name="Oswald E."/>
            <person name="Stebbins C.E."/>
        </authorList>
    </citation>
    <scope>X-RAY CRYSTALLOGRAPHY (1.70 ANGSTROMS) OF 100-282</scope>
    <scope>ACTIVE SITES</scope>
    <scope>MUTAGENESIS OF CYS-109 AND HIS-165</scope>
</reference>
<accession>P0DUW5</accession>
<geneLocation type="plasmid">
    <name>pFX13</name>
</geneLocation>
<proteinExistence type="evidence at protein level"/>
<protein>
    <recommendedName>
        <fullName>Protein-glutamine deamidase Cif</fullName>
        <ecNumber evidence="13 20">3.5.1.44</ecNumber>
    </recommendedName>
    <alternativeName>
        <fullName evidence="14">Cycle-inhibiting factor</fullName>
    </alternativeName>
</protein>